<protein>
    <recommendedName>
        <fullName evidence="1">Isopentenyl-diphosphate delta-isomerase</fullName>
        <shortName evidence="1">IPP isomerase</shortName>
        <ecNumber evidence="1">5.3.3.2</ecNumber>
    </recommendedName>
    <alternativeName>
        <fullName evidence="1">Isopentenyl diphosphate:dimethylallyl diphosphate isomerase</fullName>
    </alternativeName>
    <alternativeName>
        <fullName evidence="1">Isopentenyl pyrophosphate isomerase</fullName>
    </alternativeName>
    <alternativeName>
        <fullName evidence="1">Type 2 isopentenyl diphosphate isomerase</fullName>
        <shortName evidence="1">IDI-2</shortName>
    </alternativeName>
</protein>
<sequence>MSLINRKLEHVEICLYEDVQGIVSTLLEDVTLIHQAMPRMNFRDVDTRAEFLGKTLSLPLMVTGMTGGHEELGKVNAVIAEVVEELGLAMGVGSQRVAVERPETAESFKVTRRMAPTAPLVANLGLPQVTRGYGVKQFMDAIQMIEANAIAVHLNPAQELFQPEGEPEYPLSALEALRDISKELNVPVIVKESGTGMSMETAKLLADHGFKILDVSGQGGTSWIAVEMVRNRRKGNWKYESSQLFSGWGIPTAASIVETRYSVPDSYIIASGGIRNGLDVAKSISLGANIAGMANPVLHHAVRGKEQLKKFFEEVAFQLRAAMFLTGSRDVKTLRHAPLVISGKLKDWLESRGLTLSVYESIRKGA</sequence>
<accession>A4YIM3</accession>
<proteinExistence type="inferred from homology"/>
<feature type="chain" id="PRO_1000072070" description="Isopentenyl-diphosphate delta-isomerase">
    <location>
        <begin position="1"/>
        <end position="366"/>
    </location>
</feature>
<feature type="binding site" evidence="1">
    <location>
        <begin position="6"/>
        <end position="7"/>
    </location>
    <ligand>
        <name>substrate</name>
    </ligand>
</feature>
<feature type="binding site" evidence="1">
    <location>
        <position position="63"/>
    </location>
    <ligand>
        <name>FMN</name>
        <dbReference type="ChEBI" id="CHEBI:58210"/>
    </ligand>
</feature>
<feature type="binding site" evidence="1">
    <location>
        <begin position="64"/>
        <end position="66"/>
    </location>
    <ligand>
        <name>FMN</name>
        <dbReference type="ChEBI" id="CHEBI:58210"/>
    </ligand>
</feature>
<feature type="binding site" evidence="1">
    <location>
        <begin position="94"/>
        <end position="96"/>
    </location>
    <ligand>
        <name>substrate</name>
    </ligand>
</feature>
<feature type="binding site" evidence="1">
    <location>
        <position position="94"/>
    </location>
    <ligand>
        <name>FMN</name>
        <dbReference type="ChEBI" id="CHEBI:58210"/>
    </ligand>
</feature>
<feature type="binding site" evidence="1">
    <location>
        <position position="123"/>
    </location>
    <ligand>
        <name>FMN</name>
        <dbReference type="ChEBI" id="CHEBI:58210"/>
    </ligand>
</feature>
<feature type="binding site" evidence="1">
    <location>
        <position position="158"/>
    </location>
    <ligand>
        <name>substrate</name>
    </ligand>
</feature>
<feature type="binding site" evidence="1">
    <location>
        <position position="159"/>
    </location>
    <ligand>
        <name>Mg(2+)</name>
        <dbReference type="ChEBI" id="CHEBI:18420"/>
    </ligand>
</feature>
<feature type="binding site" evidence="1">
    <location>
        <position position="191"/>
    </location>
    <ligand>
        <name>FMN</name>
        <dbReference type="ChEBI" id="CHEBI:58210"/>
    </ligand>
</feature>
<feature type="binding site" evidence="1">
    <location>
        <position position="216"/>
    </location>
    <ligand>
        <name>FMN</name>
        <dbReference type="ChEBI" id="CHEBI:58210"/>
    </ligand>
</feature>
<feature type="binding site" evidence="1">
    <location>
        <position position="221"/>
    </location>
    <ligand>
        <name>FMN</name>
        <dbReference type="ChEBI" id="CHEBI:58210"/>
    </ligand>
</feature>
<feature type="binding site" evidence="1">
    <location>
        <begin position="273"/>
        <end position="275"/>
    </location>
    <ligand>
        <name>FMN</name>
        <dbReference type="ChEBI" id="CHEBI:58210"/>
    </ligand>
</feature>
<feature type="binding site" evidence="1">
    <location>
        <begin position="294"/>
        <end position="295"/>
    </location>
    <ligand>
        <name>FMN</name>
        <dbReference type="ChEBI" id="CHEBI:58210"/>
    </ligand>
</feature>
<name>IDI2_METS5</name>
<comment type="function">
    <text evidence="1">Involved in the biosynthesis of isoprenoids. Catalyzes the 1,3-allylic rearrangement of the homoallylic substrate isopentenyl (IPP) to its allylic isomer, dimethylallyl diphosphate (DMAPP).</text>
</comment>
<comment type="catalytic activity">
    <reaction evidence="1">
        <text>isopentenyl diphosphate = dimethylallyl diphosphate</text>
        <dbReference type="Rhea" id="RHEA:23284"/>
        <dbReference type="ChEBI" id="CHEBI:57623"/>
        <dbReference type="ChEBI" id="CHEBI:128769"/>
        <dbReference type="EC" id="5.3.3.2"/>
    </reaction>
</comment>
<comment type="cofactor">
    <cofactor evidence="1">
        <name>FMN</name>
        <dbReference type="ChEBI" id="CHEBI:58210"/>
    </cofactor>
</comment>
<comment type="cofactor">
    <cofactor evidence="1">
        <name>NADPH</name>
        <dbReference type="ChEBI" id="CHEBI:57783"/>
    </cofactor>
</comment>
<comment type="cofactor">
    <cofactor evidence="1">
        <name>Mg(2+)</name>
        <dbReference type="ChEBI" id="CHEBI:18420"/>
    </cofactor>
</comment>
<comment type="subunit">
    <text evidence="1">Homooctamer. Dimer of tetramers.</text>
</comment>
<comment type="subcellular location">
    <subcellularLocation>
        <location evidence="1">Cytoplasm</location>
    </subcellularLocation>
</comment>
<comment type="similarity">
    <text evidence="1">Belongs to the IPP isomerase type 2 family.</text>
</comment>
<gene>
    <name evidence="1" type="primary">fni</name>
    <name type="ordered locus">Msed_2136</name>
</gene>
<keyword id="KW-0963">Cytoplasm</keyword>
<keyword id="KW-0285">Flavoprotein</keyword>
<keyword id="KW-0288">FMN</keyword>
<keyword id="KW-0413">Isomerase</keyword>
<keyword id="KW-0414">Isoprene biosynthesis</keyword>
<keyword id="KW-0460">Magnesium</keyword>
<keyword id="KW-0479">Metal-binding</keyword>
<keyword id="KW-0521">NADP</keyword>
<keyword id="KW-1185">Reference proteome</keyword>
<reference key="1">
    <citation type="journal article" date="2008" name="Appl. Environ. Microbiol.">
        <title>The genome sequence of the metal-mobilizing, extremely thermoacidophilic archaeon Metallosphaera sedula provides insights into bioleaching-associated metabolism.</title>
        <authorList>
            <person name="Auernik K.S."/>
            <person name="Maezato Y."/>
            <person name="Blum P.H."/>
            <person name="Kelly R.M."/>
        </authorList>
    </citation>
    <scope>NUCLEOTIDE SEQUENCE [LARGE SCALE GENOMIC DNA]</scope>
    <source>
        <strain>ATCC 51363 / DSM 5348 / JCM 9185 / NBRC 15509 / TH2</strain>
    </source>
</reference>
<organism>
    <name type="scientific">Metallosphaera sedula (strain ATCC 51363 / DSM 5348 / JCM 9185 / NBRC 15509 / TH2)</name>
    <dbReference type="NCBI Taxonomy" id="399549"/>
    <lineage>
        <taxon>Archaea</taxon>
        <taxon>Thermoproteota</taxon>
        <taxon>Thermoprotei</taxon>
        <taxon>Sulfolobales</taxon>
        <taxon>Sulfolobaceae</taxon>
        <taxon>Metallosphaera</taxon>
    </lineage>
</organism>
<evidence type="ECO:0000255" key="1">
    <source>
        <dbReference type="HAMAP-Rule" id="MF_00354"/>
    </source>
</evidence>
<dbReference type="EC" id="5.3.3.2" evidence="1"/>
<dbReference type="EMBL" id="CP000682">
    <property type="protein sequence ID" value="ABP96275.1"/>
    <property type="molecule type" value="Genomic_DNA"/>
</dbReference>
<dbReference type="RefSeq" id="WP_012022062.1">
    <property type="nucleotide sequence ID" value="NZ_CP139956.1"/>
</dbReference>
<dbReference type="SMR" id="A4YIM3"/>
<dbReference type="STRING" id="399549.Msed_2136"/>
<dbReference type="GeneID" id="97612751"/>
<dbReference type="KEGG" id="mse:Msed_2136"/>
<dbReference type="eggNOG" id="arCOG00613">
    <property type="taxonomic scope" value="Archaea"/>
</dbReference>
<dbReference type="HOGENOM" id="CLU_065515_1_0_2"/>
<dbReference type="Proteomes" id="UP000000242">
    <property type="component" value="Chromosome"/>
</dbReference>
<dbReference type="GO" id="GO:0005737">
    <property type="term" value="C:cytoplasm"/>
    <property type="evidence" value="ECO:0007669"/>
    <property type="project" value="UniProtKB-SubCell"/>
</dbReference>
<dbReference type="GO" id="GO:0010181">
    <property type="term" value="F:FMN binding"/>
    <property type="evidence" value="ECO:0007669"/>
    <property type="project" value="UniProtKB-UniRule"/>
</dbReference>
<dbReference type="GO" id="GO:0004452">
    <property type="term" value="F:isopentenyl-diphosphate delta-isomerase activity"/>
    <property type="evidence" value="ECO:0007669"/>
    <property type="project" value="UniProtKB-UniRule"/>
</dbReference>
<dbReference type="GO" id="GO:0000287">
    <property type="term" value="F:magnesium ion binding"/>
    <property type="evidence" value="ECO:0007669"/>
    <property type="project" value="UniProtKB-UniRule"/>
</dbReference>
<dbReference type="GO" id="GO:0070402">
    <property type="term" value="F:NADPH binding"/>
    <property type="evidence" value="ECO:0007669"/>
    <property type="project" value="UniProtKB-UniRule"/>
</dbReference>
<dbReference type="GO" id="GO:0016491">
    <property type="term" value="F:oxidoreductase activity"/>
    <property type="evidence" value="ECO:0007669"/>
    <property type="project" value="InterPro"/>
</dbReference>
<dbReference type="GO" id="GO:0008299">
    <property type="term" value="P:isoprenoid biosynthetic process"/>
    <property type="evidence" value="ECO:0007669"/>
    <property type="project" value="UniProtKB-UniRule"/>
</dbReference>
<dbReference type="CDD" id="cd02811">
    <property type="entry name" value="IDI-2_FMN"/>
    <property type="match status" value="1"/>
</dbReference>
<dbReference type="Gene3D" id="3.20.20.70">
    <property type="entry name" value="Aldolase class I"/>
    <property type="match status" value="1"/>
</dbReference>
<dbReference type="HAMAP" id="MF_00354">
    <property type="entry name" value="Idi_2"/>
    <property type="match status" value="1"/>
</dbReference>
<dbReference type="InterPro" id="IPR013785">
    <property type="entry name" value="Aldolase_TIM"/>
</dbReference>
<dbReference type="InterPro" id="IPR000262">
    <property type="entry name" value="FMN-dep_DH"/>
</dbReference>
<dbReference type="InterPro" id="IPR011179">
    <property type="entry name" value="IPdP_isomerase"/>
</dbReference>
<dbReference type="NCBIfam" id="TIGR02151">
    <property type="entry name" value="IPP_isom_2"/>
    <property type="match status" value="1"/>
</dbReference>
<dbReference type="PANTHER" id="PTHR43665">
    <property type="entry name" value="ISOPENTENYL-DIPHOSPHATE DELTA-ISOMERASE"/>
    <property type="match status" value="1"/>
</dbReference>
<dbReference type="PANTHER" id="PTHR43665:SF1">
    <property type="entry name" value="ISOPENTENYL-DIPHOSPHATE DELTA-ISOMERASE"/>
    <property type="match status" value="1"/>
</dbReference>
<dbReference type="Pfam" id="PF01070">
    <property type="entry name" value="FMN_dh"/>
    <property type="match status" value="1"/>
</dbReference>
<dbReference type="PIRSF" id="PIRSF003314">
    <property type="entry name" value="IPP_isomerase"/>
    <property type="match status" value="1"/>
</dbReference>
<dbReference type="SMART" id="SM01240">
    <property type="entry name" value="IMPDH"/>
    <property type="match status" value="1"/>
</dbReference>
<dbReference type="SUPFAM" id="SSF51395">
    <property type="entry name" value="FMN-linked oxidoreductases"/>
    <property type="match status" value="1"/>
</dbReference>